<feature type="chain" id="PRO_1000203820" description="3,4-dihydroxy-2-butanone 4-phosphate synthase">
    <location>
        <begin position="1"/>
        <end position="219"/>
    </location>
</feature>
<feature type="binding site" evidence="1">
    <location>
        <begin position="37"/>
        <end position="38"/>
    </location>
    <ligand>
        <name>D-ribulose 5-phosphate</name>
        <dbReference type="ChEBI" id="CHEBI:58121"/>
    </ligand>
</feature>
<feature type="binding site" evidence="1">
    <location>
        <position position="38"/>
    </location>
    <ligand>
        <name>Mg(2+)</name>
        <dbReference type="ChEBI" id="CHEBI:18420"/>
        <label>1</label>
    </ligand>
</feature>
<feature type="binding site" evidence="1">
    <location>
        <position position="38"/>
    </location>
    <ligand>
        <name>Mg(2+)</name>
        <dbReference type="ChEBI" id="CHEBI:18420"/>
        <label>2</label>
    </ligand>
</feature>
<feature type="binding site" evidence="1">
    <location>
        <position position="42"/>
    </location>
    <ligand>
        <name>D-ribulose 5-phosphate</name>
        <dbReference type="ChEBI" id="CHEBI:58121"/>
    </ligand>
</feature>
<feature type="binding site" evidence="1">
    <location>
        <begin position="150"/>
        <end position="154"/>
    </location>
    <ligand>
        <name>D-ribulose 5-phosphate</name>
        <dbReference type="ChEBI" id="CHEBI:58121"/>
    </ligand>
</feature>
<feature type="binding site" evidence="1">
    <location>
        <position position="153"/>
    </location>
    <ligand>
        <name>Mg(2+)</name>
        <dbReference type="ChEBI" id="CHEBI:18420"/>
        <label>2</label>
    </ligand>
</feature>
<feature type="binding site" evidence="1">
    <location>
        <position position="174"/>
    </location>
    <ligand>
        <name>D-ribulose 5-phosphate</name>
        <dbReference type="ChEBI" id="CHEBI:58121"/>
    </ligand>
</feature>
<feature type="site" description="Essential for catalytic activity" evidence="1">
    <location>
        <position position="136"/>
    </location>
</feature>
<feature type="site" description="Essential for catalytic activity" evidence="1">
    <location>
        <position position="174"/>
    </location>
</feature>
<evidence type="ECO:0000255" key="1">
    <source>
        <dbReference type="HAMAP-Rule" id="MF_00180"/>
    </source>
</evidence>
<name>RIBB_EDWI9</name>
<reference key="1">
    <citation type="submission" date="2009-03" db="EMBL/GenBank/DDBJ databases">
        <title>Complete genome sequence of Edwardsiella ictaluri 93-146.</title>
        <authorList>
            <person name="Williams M.L."/>
            <person name="Gillaspy A.F."/>
            <person name="Dyer D.W."/>
            <person name="Thune R.L."/>
            <person name="Waldbieser G.C."/>
            <person name="Schuster S.C."/>
            <person name="Gipson J."/>
            <person name="Zaitshik J."/>
            <person name="Landry C."/>
            <person name="Lawrence M.L."/>
        </authorList>
    </citation>
    <scope>NUCLEOTIDE SEQUENCE [LARGE SCALE GENOMIC DNA]</scope>
    <source>
        <strain>93-146</strain>
    </source>
</reference>
<organism>
    <name type="scientific">Edwardsiella ictaluri (strain 93-146)</name>
    <dbReference type="NCBI Taxonomy" id="634503"/>
    <lineage>
        <taxon>Bacteria</taxon>
        <taxon>Pseudomonadati</taxon>
        <taxon>Pseudomonadota</taxon>
        <taxon>Gammaproteobacteria</taxon>
        <taxon>Enterobacterales</taxon>
        <taxon>Hafniaceae</taxon>
        <taxon>Edwardsiella</taxon>
    </lineage>
</organism>
<sequence length="219" mass="23898">MNQILLSDFGTPMERVERALSALRDGRGVMVLDDENRENEGDMIFAAEKMTVEQMALTIRHGSGIVCLCITEARRQQLDLPMMVSNNTSHYGTAFTVTIEAAEGVTTGVSAQDRLTTVRAAIADDAKPGDLHRPGHVFPLRARPGGVLARRGHTEATIDLVSLAGFRPAGVLCELTNDDGTMARAPQVMAFARQHEMPVVTIEDLVAYRQAREPQEQAD</sequence>
<dbReference type="EC" id="4.1.99.12" evidence="1"/>
<dbReference type="EMBL" id="CP001600">
    <property type="protein sequence ID" value="ACR67777.1"/>
    <property type="molecule type" value="Genomic_DNA"/>
</dbReference>
<dbReference type="RefSeq" id="WP_015869977.1">
    <property type="nucleotide sequence ID" value="NZ_CP169062.1"/>
</dbReference>
<dbReference type="SMR" id="C5BHH8"/>
<dbReference type="STRING" id="67780.B6E78_13435"/>
<dbReference type="GeneID" id="69537624"/>
<dbReference type="KEGG" id="eic:NT01EI_0545"/>
<dbReference type="PATRIC" id="fig|634503.3.peg.494"/>
<dbReference type="HOGENOM" id="CLU_020273_3_0_6"/>
<dbReference type="OrthoDB" id="9793111at2"/>
<dbReference type="UniPathway" id="UPA00275">
    <property type="reaction ID" value="UER00399"/>
</dbReference>
<dbReference type="Proteomes" id="UP000001485">
    <property type="component" value="Chromosome"/>
</dbReference>
<dbReference type="GO" id="GO:0005829">
    <property type="term" value="C:cytosol"/>
    <property type="evidence" value="ECO:0007669"/>
    <property type="project" value="TreeGrafter"/>
</dbReference>
<dbReference type="GO" id="GO:0008686">
    <property type="term" value="F:3,4-dihydroxy-2-butanone-4-phosphate synthase activity"/>
    <property type="evidence" value="ECO:0007669"/>
    <property type="project" value="UniProtKB-UniRule"/>
</dbReference>
<dbReference type="GO" id="GO:0000287">
    <property type="term" value="F:magnesium ion binding"/>
    <property type="evidence" value="ECO:0007669"/>
    <property type="project" value="UniProtKB-UniRule"/>
</dbReference>
<dbReference type="GO" id="GO:0030145">
    <property type="term" value="F:manganese ion binding"/>
    <property type="evidence" value="ECO:0007669"/>
    <property type="project" value="UniProtKB-UniRule"/>
</dbReference>
<dbReference type="GO" id="GO:0009231">
    <property type="term" value="P:riboflavin biosynthetic process"/>
    <property type="evidence" value="ECO:0007669"/>
    <property type="project" value="UniProtKB-UniRule"/>
</dbReference>
<dbReference type="FunFam" id="3.90.870.10:FF:000002">
    <property type="entry name" value="3,4-dihydroxy-2-butanone 4-phosphate synthase"/>
    <property type="match status" value="1"/>
</dbReference>
<dbReference type="Gene3D" id="3.90.870.10">
    <property type="entry name" value="DHBP synthase"/>
    <property type="match status" value="1"/>
</dbReference>
<dbReference type="HAMAP" id="MF_00180">
    <property type="entry name" value="RibB"/>
    <property type="match status" value="1"/>
</dbReference>
<dbReference type="InterPro" id="IPR017945">
    <property type="entry name" value="DHBP_synth_RibB-like_a/b_dom"/>
</dbReference>
<dbReference type="InterPro" id="IPR000422">
    <property type="entry name" value="DHBP_synthase_RibB"/>
</dbReference>
<dbReference type="NCBIfam" id="TIGR00506">
    <property type="entry name" value="ribB"/>
    <property type="match status" value="1"/>
</dbReference>
<dbReference type="PANTHER" id="PTHR21327:SF38">
    <property type="entry name" value="3,4-DIHYDROXY-2-BUTANONE 4-PHOSPHATE SYNTHASE"/>
    <property type="match status" value="1"/>
</dbReference>
<dbReference type="PANTHER" id="PTHR21327">
    <property type="entry name" value="GTP CYCLOHYDROLASE II-RELATED"/>
    <property type="match status" value="1"/>
</dbReference>
<dbReference type="Pfam" id="PF00926">
    <property type="entry name" value="DHBP_synthase"/>
    <property type="match status" value="1"/>
</dbReference>
<dbReference type="SUPFAM" id="SSF55821">
    <property type="entry name" value="YrdC/RibB"/>
    <property type="match status" value="1"/>
</dbReference>
<keyword id="KW-0456">Lyase</keyword>
<keyword id="KW-0460">Magnesium</keyword>
<keyword id="KW-0464">Manganese</keyword>
<keyword id="KW-0479">Metal-binding</keyword>
<keyword id="KW-0686">Riboflavin biosynthesis</keyword>
<gene>
    <name evidence="1" type="primary">ribB</name>
    <name type="ordered locus">NT01EI_0545</name>
</gene>
<accession>C5BHH8</accession>
<proteinExistence type="inferred from homology"/>
<comment type="function">
    <text evidence="1">Catalyzes the conversion of D-ribulose 5-phosphate to formate and 3,4-dihydroxy-2-butanone 4-phosphate.</text>
</comment>
<comment type="catalytic activity">
    <reaction evidence="1">
        <text>D-ribulose 5-phosphate = (2S)-2-hydroxy-3-oxobutyl phosphate + formate + H(+)</text>
        <dbReference type="Rhea" id="RHEA:18457"/>
        <dbReference type="ChEBI" id="CHEBI:15378"/>
        <dbReference type="ChEBI" id="CHEBI:15740"/>
        <dbReference type="ChEBI" id="CHEBI:58121"/>
        <dbReference type="ChEBI" id="CHEBI:58830"/>
        <dbReference type="EC" id="4.1.99.12"/>
    </reaction>
</comment>
<comment type="cofactor">
    <cofactor evidence="1">
        <name>Mg(2+)</name>
        <dbReference type="ChEBI" id="CHEBI:18420"/>
    </cofactor>
    <cofactor evidence="1">
        <name>Mn(2+)</name>
        <dbReference type="ChEBI" id="CHEBI:29035"/>
    </cofactor>
    <text evidence="1">Binds 2 divalent metal cations per subunit. Magnesium or manganese.</text>
</comment>
<comment type="pathway">
    <text evidence="1">Cofactor biosynthesis; riboflavin biosynthesis; 2-hydroxy-3-oxobutyl phosphate from D-ribulose 5-phosphate: step 1/1.</text>
</comment>
<comment type="subunit">
    <text evidence="1">Homodimer.</text>
</comment>
<comment type="similarity">
    <text evidence="1">Belongs to the DHBP synthase family.</text>
</comment>
<protein>
    <recommendedName>
        <fullName evidence="1">3,4-dihydroxy-2-butanone 4-phosphate synthase</fullName>
        <shortName evidence="1">DHBP synthase</shortName>
        <ecNumber evidence="1">4.1.99.12</ecNumber>
    </recommendedName>
</protein>